<keyword id="KW-0119">Carbohydrate metabolism</keyword>
<keyword id="KW-0963">Cytoplasm</keyword>
<keyword id="KW-0378">Hydrolase</keyword>
<keyword id="KW-0460">Magnesium</keyword>
<keyword id="KW-0479">Metal-binding</keyword>
<keyword id="KW-1185">Reference proteome</keyword>
<gene>
    <name evidence="1" type="primary">fbp2</name>
    <name type="ordered locus">Xaut_3528</name>
</gene>
<reference key="1">
    <citation type="submission" date="2007-07" db="EMBL/GenBank/DDBJ databases">
        <title>Complete sequence of chromosome of Xanthobacter autotrophicus Py2.</title>
        <authorList>
            <consortium name="US DOE Joint Genome Institute"/>
            <person name="Copeland A."/>
            <person name="Lucas S."/>
            <person name="Lapidus A."/>
            <person name="Barry K."/>
            <person name="Glavina del Rio T."/>
            <person name="Hammon N."/>
            <person name="Israni S."/>
            <person name="Dalin E."/>
            <person name="Tice H."/>
            <person name="Pitluck S."/>
            <person name="Sims D."/>
            <person name="Brettin T."/>
            <person name="Bruce D."/>
            <person name="Detter J.C."/>
            <person name="Han C."/>
            <person name="Tapia R."/>
            <person name="Brainard J."/>
            <person name="Schmutz J."/>
            <person name="Larimer F."/>
            <person name="Land M."/>
            <person name="Hauser L."/>
            <person name="Kyrpides N."/>
            <person name="Kim E."/>
            <person name="Ensigns S.A."/>
            <person name="Richardson P."/>
        </authorList>
    </citation>
    <scope>NUCLEOTIDE SEQUENCE [LARGE SCALE GENOMIC DNA]</scope>
    <source>
        <strain>ATCC BAA-1158 / Py2</strain>
    </source>
</reference>
<accession>A7IL64</accession>
<protein>
    <recommendedName>
        <fullName evidence="1">Fructose-1,6-bisphosphatase class 1 2</fullName>
        <shortName evidence="1">FBPase class 1 2</shortName>
        <ecNumber evidence="1">3.1.3.11</ecNumber>
    </recommendedName>
    <alternativeName>
        <fullName evidence="1">D-fructose-1,6-bisphosphate 1-phosphohydrolase class 1 2</fullName>
    </alternativeName>
</protein>
<evidence type="ECO:0000255" key="1">
    <source>
        <dbReference type="HAMAP-Rule" id="MF_01855"/>
    </source>
</evidence>
<organism>
    <name type="scientific">Xanthobacter autotrophicus (strain ATCC BAA-1158 / Py2)</name>
    <dbReference type="NCBI Taxonomy" id="78245"/>
    <lineage>
        <taxon>Bacteria</taxon>
        <taxon>Pseudomonadati</taxon>
        <taxon>Pseudomonadota</taxon>
        <taxon>Alphaproteobacteria</taxon>
        <taxon>Hyphomicrobiales</taxon>
        <taxon>Xanthobacteraceae</taxon>
        <taxon>Xanthobacter</taxon>
    </lineage>
</organism>
<dbReference type="EC" id="3.1.3.11" evidence="1"/>
<dbReference type="EMBL" id="CP000781">
    <property type="protein sequence ID" value="ABS68757.1"/>
    <property type="molecule type" value="Genomic_DNA"/>
</dbReference>
<dbReference type="SMR" id="A7IL64"/>
<dbReference type="STRING" id="78245.Xaut_3528"/>
<dbReference type="KEGG" id="xau:Xaut_3528"/>
<dbReference type="eggNOG" id="COG0158">
    <property type="taxonomic scope" value="Bacteria"/>
</dbReference>
<dbReference type="HOGENOM" id="CLU_039977_0_0_5"/>
<dbReference type="OrthoDB" id="9806756at2"/>
<dbReference type="PhylomeDB" id="A7IL64"/>
<dbReference type="UniPathway" id="UPA00138"/>
<dbReference type="Proteomes" id="UP000002417">
    <property type="component" value="Chromosome"/>
</dbReference>
<dbReference type="GO" id="GO:0005829">
    <property type="term" value="C:cytosol"/>
    <property type="evidence" value="ECO:0007669"/>
    <property type="project" value="TreeGrafter"/>
</dbReference>
<dbReference type="GO" id="GO:0042132">
    <property type="term" value="F:fructose 1,6-bisphosphate 1-phosphatase activity"/>
    <property type="evidence" value="ECO:0007669"/>
    <property type="project" value="UniProtKB-UniRule"/>
</dbReference>
<dbReference type="GO" id="GO:0000287">
    <property type="term" value="F:magnesium ion binding"/>
    <property type="evidence" value="ECO:0007669"/>
    <property type="project" value="UniProtKB-UniRule"/>
</dbReference>
<dbReference type="GO" id="GO:0030388">
    <property type="term" value="P:fructose 1,6-bisphosphate metabolic process"/>
    <property type="evidence" value="ECO:0007669"/>
    <property type="project" value="TreeGrafter"/>
</dbReference>
<dbReference type="GO" id="GO:0006002">
    <property type="term" value="P:fructose 6-phosphate metabolic process"/>
    <property type="evidence" value="ECO:0007669"/>
    <property type="project" value="TreeGrafter"/>
</dbReference>
<dbReference type="GO" id="GO:0006000">
    <property type="term" value="P:fructose metabolic process"/>
    <property type="evidence" value="ECO:0007669"/>
    <property type="project" value="TreeGrafter"/>
</dbReference>
<dbReference type="GO" id="GO:0006094">
    <property type="term" value="P:gluconeogenesis"/>
    <property type="evidence" value="ECO:0007669"/>
    <property type="project" value="UniProtKB-UniRule"/>
</dbReference>
<dbReference type="GO" id="GO:0005986">
    <property type="term" value="P:sucrose biosynthetic process"/>
    <property type="evidence" value="ECO:0007669"/>
    <property type="project" value="TreeGrafter"/>
</dbReference>
<dbReference type="CDD" id="cd00354">
    <property type="entry name" value="FBPase"/>
    <property type="match status" value="1"/>
</dbReference>
<dbReference type="FunFam" id="3.40.190.80:FF:000011">
    <property type="entry name" value="Fructose-1,6-bisphosphatase class 1"/>
    <property type="match status" value="1"/>
</dbReference>
<dbReference type="Gene3D" id="3.40.190.80">
    <property type="match status" value="1"/>
</dbReference>
<dbReference type="Gene3D" id="3.30.540.10">
    <property type="entry name" value="Fructose-1,6-Bisphosphatase, subunit A, domain 1"/>
    <property type="match status" value="1"/>
</dbReference>
<dbReference type="HAMAP" id="MF_01855">
    <property type="entry name" value="FBPase_class1"/>
    <property type="match status" value="1"/>
</dbReference>
<dbReference type="InterPro" id="IPR044015">
    <property type="entry name" value="FBPase_C_dom"/>
</dbReference>
<dbReference type="InterPro" id="IPR000146">
    <property type="entry name" value="FBPase_class-1"/>
</dbReference>
<dbReference type="InterPro" id="IPR033391">
    <property type="entry name" value="FBPase_N"/>
</dbReference>
<dbReference type="InterPro" id="IPR028343">
    <property type="entry name" value="FBPtase"/>
</dbReference>
<dbReference type="InterPro" id="IPR020548">
    <property type="entry name" value="Fructose_bisphosphatase_AS"/>
</dbReference>
<dbReference type="NCBIfam" id="NF006779">
    <property type="entry name" value="PRK09293.1-3"/>
    <property type="match status" value="1"/>
</dbReference>
<dbReference type="NCBIfam" id="NF006780">
    <property type="entry name" value="PRK09293.1-4"/>
    <property type="match status" value="1"/>
</dbReference>
<dbReference type="PANTHER" id="PTHR11556">
    <property type="entry name" value="FRUCTOSE-1,6-BISPHOSPHATASE-RELATED"/>
    <property type="match status" value="1"/>
</dbReference>
<dbReference type="PANTHER" id="PTHR11556:SF35">
    <property type="entry name" value="SEDOHEPTULOSE-1,7-BISPHOSPHATASE, CHLOROPLASTIC"/>
    <property type="match status" value="1"/>
</dbReference>
<dbReference type="Pfam" id="PF00316">
    <property type="entry name" value="FBPase"/>
    <property type="match status" value="1"/>
</dbReference>
<dbReference type="Pfam" id="PF18913">
    <property type="entry name" value="FBPase_C"/>
    <property type="match status" value="1"/>
</dbReference>
<dbReference type="PIRSF" id="PIRSF500210">
    <property type="entry name" value="FBPtase"/>
    <property type="match status" value="1"/>
</dbReference>
<dbReference type="PIRSF" id="PIRSF000904">
    <property type="entry name" value="FBPtase_SBPase"/>
    <property type="match status" value="1"/>
</dbReference>
<dbReference type="PRINTS" id="PR00115">
    <property type="entry name" value="F16BPHPHTASE"/>
</dbReference>
<dbReference type="SUPFAM" id="SSF56655">
    <property type="entry name" value="Carbohydrate phosphatase"/>
    <property type="match status" value="1"/>
</dbReference>
<dbReference type="PROSITE" id="PS00124">
    <property type="entry name" value="FBPASE"/>
    <property type="match status" value="1"/>
</dbReference>
<comment type="catalytic activity">
    <reaction evidence="1">
        <text>beta-D-fructose 1,6-bisphosphate + H2O = beta-D-fructose 6-phosphate + phosphate</text>
        <dbReference type="Rhea" id="RHEA:11064"/>
        <dbReference type="ChEBI" id="CHEBI:15377"/>
        <dbReference type="ChEBI" id="CHEBI:32966"/>
        <dbReference type="ChEBI" id="CHEBI:43474"/>
        <dbReference type="ChEBI" id="CHEBI:57634"/>
        <dbReference type="EC" id="3.1.3.11"/>
    </reaction>
</comment>
<comment type="cofactor">
    <cofactor evidence="1">
        <name>Mg(2+)</name>
        <dbReference type="ChEBI" id="CHEBI:18420"/>
    </cofactor>
    <text evidence="1">Binds 2 magnesium ions per subunit.</text>
</comment>
<comment type="pathway">
    <text evidence="1">Carbohydrate biosynthesis; gluconeogenesis.</text>
</comment>
<comment type="subunit">
    <text evidence="1">Homotetramer.</text>
</comment>
<comment type="subcellular location">
    <subcellularLocation>
        <location evidence="1">Cytoplasm</location>
    </subcellularLocation>
</comment>
<comment type="similarity">
    <text evidence="1">Belongs to the FBPase class 1 family.</text>
</comment>
<sequence length="329" mass="35230">MSELVTLKTYLGTWAGADTGRTAVAQAVTAIAEAGVGIADLVARGPLEEGLASIRGVDPNAGGDAQKELDVVAEERIKAALLPTPTAFLASEESEELIPLNPDGRLVIAVDPLDGSSNIDTNVSVGTIYSILPYDAAVHTDPVSAVMRPGVNQVASGFLAYGPATILVATFGEGTQVFVHDRQTGEFVLARTNVEIPAETKEYGVNQSNVRHWAEPMSAYIADCLAGKDGPRGKDFNMRWVGSMVADAFRIFTRGGVYVYPGDKRKGYENGRLRLIYEANPVAFLTEQAKGAATDGKTRILDIQPHHIHQRIPLVFGSKAEVEKIASYY</sequence>
<feature type="chain" id="PRO_0000364749" description="Fructose-1,6-bisphosphatase class 1 2">
    <location>
        <begin position="1"/>
        <end position="329"/>
    </location>
</feature>
<feature type="binding site" evidence="1">
    <location>
        <position position="92"/>
    </location>
    <ligand>
        <name>Mg(2+)</name>
        <dbReference type="ChEBI" id="CHEBI:18420"/>
        <label>1</label>
    </ligand>
</feature>
<feature type="binding site" evidence="1">
    <location>
        <position position="111"/>
    </location>
    <ligand>
        <name>Mg(2+)</name>
        <dbReference type="ChEBI" id="CHEBI:18420"/>
        <label>1</label>
    </ligand>
</feature>
<feature type="binding site" evidence="1">
    <location>
        <position position="111"/>
    </location>
    <ligand>
        <name>Mg(2+)</name>
        <dbReference type="ChEBI" id="CHEBI:18420"/>
        <label>2</label>
    </ligand>
</feature>
<feature type="binding site" evidence="1">
    <location>
        <position position="113"/>
    </location>
    <ligand>
        <name>Mg(2+)</name>
        <dbReference type="ChEBI" id="CHEBI:18420"/>
        <label>1</label>
    </ligand>
</feature>
<feature type="binding site" evidence="1">
    <location>
        <begin position="114"/>
        <end position="117"/>
    </location>
    <ligand>
        <name>substrate</name>
    </ligand>
</feature>
<feature type="binding site" evidence="1">
    <location>
        <position position="114"/>
    </location>
    <ligand>
        <name>Mg(2+)</name>
        <dbReference type="ChEBI" id="CHEBI:18420"/>
        <label>2</label>
    </ligand>
</feature>
<feature type="binding site" evidence="1">
    <location>
        <position position="206"/>
    </location>
    <ligand>
        <name>substrate</name>
    </ligand>
</feature>
<feature type="binding site" evidence="1">
    <location>
        <position position="278"/>
    </location>
    <ligand>
        <name>Mg(2+)</name>
        <dbReference type="ChEBI" id="CHEBI:18420"/>
        <label>2</label>
    </ligand>
</feature>
<proteinExistence type="inferred from homology"/>
<name>F16A2_XANP2</name>